<proteinExistence type="evidence at transcript level"/>
<accession>Q5ZJL7</accession>
<organism>
    <name type="scientific">Gallus gallus</name>
    <name type="common">Chicken</name>
    <dbReference type="NCBI Taxonomy" id="9031"/>
    <lineage>
        <taxon>Eukaryota</taxon>
        <taxon>Metazoa</taxon>
        <taxon>Chordata</taxon>
        <taxon>Craniata</taxon>
        <taxon>Vertebrata</taxon>
        <taxon>Euteleostomi</taxon>
        <taxon>Archelosauria</taxon>
        <taxon>Archosauria</taxon>
        <taxon>Dinosauria</taxon>
        <taxon>Saurischia</taxon>
        <taxon>Theropoda</taxon>
        <taxon>Coelurosauria</taxon>
        <taxon>Aves</taxon>
        <taxon>Neognathae</taxon>
        <taxon>Galloanserae</taxon>
        <taxon>Galliformes</taxon>
        <taxon>Phasianidae</taxon>
        <taxon>Phasianinae</taxon>
        <taxon>Gallus</taxon>
    </lineage>
</organism>
<protein>
    <recommendedName>
        <fullName>DNA damage-binding protein 2</fullName>
    </recommendedName>
    <alternativeName>
        <fullName>Damage-specific DNA-binding protein 2</fullName>
    </alternativeName>
</protein>
<keyword id="KW-0158">Chromosome</keyword>
<keyword id="KW-0227">DNA damage</keyword>
<keyword id="KW-0234">DNA repair</keyword>
<keyword id="KW-0238">DNA-binding</keyword>
<keyword id="KW-0539">Nucleus</keyword>
<keyword id="KW-1185">Reference proteome</keyword>
<keyword id="KW-0677">Repeat</keyword>
<keyword id="KW-0833">Ubl conjugation pathway</keyword>
<keyword id="KW-0853">WD repeat</keyword>
<dbReference type="EMBL" id="AJ720417">
    <property type="protein sequence ID" value="CAG32076.1"/>
    <property type="molecule type" value="mRNA"/>
</dbReference>
<dbReference type="RefSeq" id="NP_001034390.1">
    <property type="nucleotide sequence ID" value="NM_001039301.1"/>
</dbReference>
<dbReference type="RefSeq" id="XP_015142508.1">
    <property type="nucleotide sequence ID" value="XM_015287022.1"/>
</dbReference>
<dbReference type="RefSeq" id="XP_015142509.1">
    <property type="nucleotide sequence ID" value="XM_015287023.1"/>
</dbReference>
<dbReference type="RefSeq" id="XP_015142510.1">
    <property type="nucleotide sequence ID" value="XM_015287024.1"/>
</dbReference>
<dbReference type="RefSeq" id="XP_015142511.1">
    <property type="nucleotide sequence ID" value="XM_015287025.1"/>
</dbReference>
<dbReference type="RefSeq" id="XP_046774313.1">
    <property type="nucleotide sequence ID" value="XM_046918357.1"/>
</dbReference>
<dbReference type="RefSeq" id="XP_046774314.1">
    <property type="nucleotide sequence ID" value="XM_046918358.1"/>
</dbReference>
<dbReference type="RefSeq" id="XP_046774315.1">
    <property type="nucleotide sequence ID" value="XM_046918359.1"/>
</dbReference>
<dbReference type="SMR" id="Q5ZJL7"/>
<dbReference type="FunCoup" id="Q5ZJL7">
    <property type="interactions" value="951"/>
</dbReference>
<dbReference type="STRING" id="9031.ENSGALP00000013362"/>
<dbReference type="PaxDb" id="9031-ENSGALP00000013362"/>
<dbReference type="GeneID" id="423185"/>
<dbReference type="KEGG" id="gga:423185"/>
<dbReference type="CTD" id="1643"/>
<dbReference type="VEuPathDB" id="HostDB:geneid_423185"/>
<dbReference type="eggNOG" id="KOG4328">
    <property type="taxonomic scope" value="Eukaryota"/>
</dbReference>
<dbReference type="HOGENOM" id="CLU_036401_0_0_1"/>
<dbReference type="InParanoid" id="Q5ZJL7"/>
<dbReference type="OrthoDB" id="9890280at2759"/>
<dbReference type="PhylomeDB" id="Q5ZJL7"/>
<dbReference type="Reactome" id="R-GGA-5689880">
    <property type="pathway name" value="Ub-specific processing proteases"/>
</dbReference>
<dbReference type="Reactome" id="R-GGA-5696394">
    <property type="pathway name" value="DNA Damage Recognition in GG-NER"/>
</dbReference>
<dbReference type="Reactome" id="R-GGA-5696395">
    <property type="pathway name" value="Formation of Incision Complex in GG-NER"/>
</dbReference>
<dbReference type="Reactome" id="R-GGA-5696400">
    <property type="pathway name" value="Dual Incision in GG-NER"/>
</dbReference>
<dbReference type="Reactome" id="R-GGA-8951664">
    <property type="pathway name" value="Neddylation"/>
</dbReference>
<dbReference type="UniPathway" id="UPA00143"/>
<dbReference type="PRO" id="PR:Q5ZJL7"/>
<dbReference type="Proteomes" id="UP000000539">
    <property type="component" value="Chromosome 5"/>
</dbReference>
<dbReference type="Bgee" id="ENSGALG00000008218">
    <property type="expression patterns" value="Expressed in spermatid and 13 other cell types or tissues"/>
</dbReference>
<dbReference type="GO" id="GO:0080008">
    <property type="term" value="C:Cul4-RING E3 ubiquitin ligase complex"/>
    <property type="evidence" value="ECO:0007669"/>
    <property type="project" value="InterPro"/>
</dbReference>
<dbReference type="GO" id="GO:0005634">
    <property type="term" value="C:nucleus"/>
    <property type="evidence" value="ECO:0000318"/>
    <property type="project" value="GO_Central"/>
</dbReference>
<dbReference type="GO" id="GO:0090734">
    <property type="term" value="C:site of DNA damage"/>
    <property type="evidence" value="ECO:0000250"/>
    <property type="project" value="UniProtKB"/>
</dbReference>
<dbReference type="GO" id="GO:0003684">
    <property type="term" value="F:damaged DNA binding"/>
    <property type="evidence" value="ECO:0007669"/>
    <property type="project" value="InterPro"/>
</dbReference>
<dbReference type="GO" id="GO:0006281">
    <property type="term" value="P:DNA repair"/>
    <property type="evidence" value="ECO:0000318"/>
    <property type="project" value="GO_Central"/>
</dbReference>
<dbReference type="GO" id="GO:0006289">
    <property type="term" value="P:nucleotide-excision repair"/>
    <property type="evidence" value="ECO:0000250"/>
    <property type="project" value="UniProtKB"/>
</dbReference>
<dbReference type="GO" id="GO:0016567">
    <property type="term" value="P:protein ubiquitination"/>
    <property type="evidence" value="ECO:0007669"/>
    <property type="project" value="UniProtKB-UniPathway"/>
</dbReference>
<dbReference type="GO" id="GO:0009411">
    <property type="term" value="P:response to UV"/>
    <property type="evidence" value="ECO:0000318"/>
    <property type="project" value="GO_Central"/>
</dbReference>
<dbReference type="FunFam" id="1.10.287.3280:FF:000001">
    <property type="entry name" value="DNA damage-binding protein 2"/>
    <property type="match status" value="1"/>
</dbReference>
<dbReference type="FunFam" id="2.130.10.10:FF:000161">
    <property type="entry name" value="DNA damage-binding protein 2"/>
    <property type="match status" value="1"/>
</dbReference>
<dbReference type="Gene3D" id="1.10.287.3280">
    <property type="match status" value="1"/>
</dbReference>
<dbReference type="Gene3D" id="2.130.10.10">
    <property type="entry name" value="YVTN repeat-like/Quinoprotein amine dehydrogenase"/>
    <property type="match status" value="1"/>
</dbReference>
<dbReference type="InterPro" id="IPR033312">
    <property type="entry name" value="DDB2"/>
</dbReference>
<dbReference type="InterPro" id="IPR015943">
    <property type="entry name" value="WD40/YVTN_repeat-like_dom_sf"/>
</dbReference>
<dbReference type="InterPro" id="IPR019775">
    <property type="entry name" value="WD40_repeat_CS"/>
</dbReference>
<dbReference type="InterPro" id="IPR036322">
    <property type="entry name" value="WD40_repeat_dom_sf"/>
</dbReference>
<dbReference type="InterPro" id="IPR001680">
    <property type="entry name" value="WD40_rpt"/>
</dbReference>
<dbReference type="PANTHER" id="PTHR15169">
    <property type="entry name" value="DAMAGE-SPECIFIC DNA BINDING PROTEIN 2"/>
    <property type="match status" value="1"/>
</dbReference>
<dbReference type="PANTHER" id="PTHR15169:SF0">
    <property type="entry name" value="DNA DAMAGE-BINDING PROTEIN 2"/>
    <property type="match status" value="1"/>
</dbReference>
<dbReference type="Pfam" id="PF00400">
    <property type="entry name" value="WD40"/>
    <property type="match status" value="2"/>
</dbReference>
<dbReference type="SMART" id="SM00320">
    <property type="entry name" value="WD40"/>
    <property type="match status" value="4"/>
</dbReference>
<dbReference type="SUPFAM" id="SSF50978">
    <property type="entry name" value="WD40 repeat-like"/>
    <property type="match status" value="1"/>
</dbReference>
<dbReference type="PROSITE" id="PS00678">
    <property type="entry name" value="WD_REPEATS_1"/>
    <property type="match status" value="1"/>
</dbReference>
<dbReference type="PROSITE" id="PS50082">
    <property type="entry name" value="WD_REPEATS_2"/>
    <property type="match status" value="1"/>
</dbReference>
<dbReference type="PROSITE" id="PS50294">
    <property type="entry name" value="WD_REPEATS_REGION"/>
    <property type="match status" value="1"/>
</dbReference>
<feature type="chain" id="PRO_0000351089" description="DNA damage-binding protein 2">
    <location>
        <begin position="1"/>
        <end position="507"/>
    </location>
</feature>
<feature type="repeat" description="WD 1">
    <location>
        <begin position="129"/>
        <end position="164"/>
    </location>
</feature>
<feature type="repeat" description="WD 2">
    <location>
        <begin position="172"/>
        <end position="207"/>
    </location>
</feature>
<feature type="repeat" description="WD 3">
    <location>
        <begin position="223"/>
        <end position="258"/>
    </location>
</feature>
<feature type="repeat" description="WD 4">
    <location>
        <begin position="264"/>
        <end position="307"/>
    </location>
</feature>
<feature type="repeat" description="WD 5">
    <location>
        <begin position="310"/>
        <end position="350"/>
    </location>
</feature>
<feature type="repeat" description="WD 6">
    <location>
        <begin position="364"/>
        <end position="407"/>
    </location>
</feature>
<feature type="repeat" description="WD 7">
    <location>
        <begin position="417"/>
        <end position="441"/>
    </location>
</feature>
<feature type="region of interest" description="Disordered" evidence="2">
    <location>
        <begin position="1"/>
        <end position="32"/>
    </location>
</feature>
<feature type="region of interest" description="Required for interaction with DDB1" evidence="1">
    <location>
        <begin position="81"/>
        <end position="92"/>
    </location>
</feature>
<feature type="region of interest" description="Required for interaction with DDB1" evidence="1">
    <location>
        <begin position="100"/>
        <end position="111"/>
    </location>
</feature>
<feature type="region of interest" description="Photolesion recognition" evidence="1">
    <location>
        <begin position="355"/>
        <end position="357"/>
    </location>
</feature>
<feature type="region of interest" description="Disordered" evidence="2">
    <location>
        <begin position="459"/>
        <end position="487"/>
    </location>
</feature>
<feature type="short sequence motif" description="DWD box">
    <location>
        <begin position="276"/>
        <end position="294"/>
    </location>
</feature>
<feature type="compositionally biased region" description="Basic and acidic residues" evidence="2">
    <location>
        <begin position="7"/>
        <end position="32"/>
    </location>
</feature>
<reference key="1">
    <citation type="journal article" date="2005" name="Genome Biol.">
        <title>Full-length cDNAs from chicken bursal lymphocytes to facilitate gene function analysis.</title>
        <authorList>
            <person name="Caldwell R.B."/>
            <person name="Kierzek A.M."/>
            <person name="Arakawa H."/>
            <person name="Bezzubov Y."/>
            <person name="Zaim J."/>
            <person name="Fiedler P."/>
            <person name="Kutter S."/>
            <person name="Blagodatski A."/>
            <person name="Kostovska D."/>
            <person name="Koter M."/>
            <person name="Plachy J."/>
            <person name="Carninci P."/>
            <person name="Hayashizaki Y."/>
            <person name="Buerstedde J.-M."/>
        </authorList>
    </citation>
    <scope>NUCLEOTIDE SEQUENCE [LARGE SCALE MRNA]</scope>
    <source>
        <strain>CB</strain>
        <tissue>Bursa of Fabricius</tissue>
    </source>
</reference>
<evidence type="ECO:0000250" key="1">
    <source>
        <dbReference type="UniProtKB" id="Q92466"/>
    </source>
</evidence>
<evidence type="ECO:0000256" key="2">
    <source>
        <dbReference type="SAM" id="MobiDB-lite"/>
    </source>
</evidence>
<evidence type="ECO:0000305" key="3"/>
<gene>
    <name type="primary">DDB2</name>
    <name type="ORF">RCJMB04_17d21</name>
</gene>
<sequence>MAPVNQPKDKKHEKAHEHRSEEAKSAGKRKLDYEGLENEPLAKKLFLRKTSKAQEKIGWNRGGTVMRNTRALFHQPKWQCSIVHYVYQNMLGGSIRAQLRQCLQLPFLRSLTSYRLFRTASPFDRRVTCLEWHPTHPSTVAVGSKGGDIILWDYEVLTKTCFIKGKGPGDSLGDIKFSPYEAVKLYVASGDGTLSLQDLEGRAVQVISRAPDCGHENHNVCCWYCSVDVSASCRAVVTGDNLGNVVLLSTSGEEIWKLKLHKKKVTHVEFNSRCEWLLATASVDQTVKIWDLRNIKDKANFLHVLPHDKPVNAAYFSPTDGAKLLSTDQRNEIRVYSCSDWTKPQHLIPHPHRQFQHLTPIKATWHPRYDLIVVGRYPDPKFPGYTVNELRTVDIFDGNTGEMVCQLYDPNASGIISLNKFNPMGDTLASGMGFNILIWSREEMVMKKQEHLLKAMTEQGIGSRSLSRRGGQRQANPGTSKLKAKLLSWEVEEMGTKTKDSKSQGRK</sequence>
<name>DDB2_CHICK</name>
<comment type="function">
    <text evidence="1">Protein, which is both involved in DNA repair and protein ubiquitination, as part of the UV-DDB complex and DCX (DDB1-CUL4-X-box) complexes, respectively. Core component of the UV-DDB complex (UV-damaged DNA-binding protein complex), a complex that recognizes UV-induced DNA damage and recruit proteins of the nucleotide excision repair pathway (the NER pathway) to initiate DNA repair. The UV-DDB complex preferentially binds to cyclobutane pyrimidine dimers (CPD), 6-4 photoproducts (6-4 PP), apurinic sites and short mismatches. Also functions as the substrate recognition module for the DCX (DDB2-CUL4-X-box) E3 ubiquitin-protein ligase complex DDB2-CUL4-ROC1 (also known as CUL4-DDB-ROC1 and CUL4-DDB-RBX1). The DDB2-CUL4-ROC1 complex may ubiquitinate histone H2A, histone H3 and histone H4 at sites of UV-induced DNA damage. The ubiquitination of histones may facilitate their removal from the nucleosome and promote subsequent DNA repair.</text>
</comment>
<comment type="pathway">
    <text>Protein modification; protein ubiquitination.</text>
</comment>
<comment type="subunit">
    <text evidence="1">Component of the UV-DDB complex which includes DDB1 and DDB2 (By similarity). Component of the DCX (DDB1-CUL4-X-box) E3 ubiquitin-protein ligase complex DDB1-CUL4-ROC1 (also known as CUL4-DDB-ROC1 and CUL4-DDB-RBX1), which includes CUL4A or CUL4B, DDB1, DDB2 and RBX1. DDB2 may function as the substrate recognition module within this complex. A large number of other DCX complexes may also exist in which an alternate substrate targeting subunit replaces DDB2. These targeting subunits are generally known as DCAF (DDB1- and CUL4-associated factor) or CDW (CUL4-DDB1-associated WD40-repeat) proteins (By similarity).</text>
</comment>
<comment type="subcellular location">
    <subcellularLocation>
        <location evidence="1">Nucleus</location>
    </subcellularLocation>
    <subcellularLocation>
        <location evidence="1">Chromosome</location>
    </subcellularLocation>
    <text evidence="1">Accumulates at sites of DNA damage following UV irradiation.</text>
</comment>
<comment type="domain">
    <text evidence="1">The DWD box is required for interaction with DDB1.</text>
</comment>
<comment type="domain">
    <text evidence="1">Interblade loops of the WD repeat region mediate most of the interaction with DNA. A hairpin between blades 5 and 6 inserts into DNA minor groove and mediates recognition of lesions and separation of the damaged and undamaged strands (By similarity).</text>
</comment>
<comment type="similarity">
    <text evidence="3">Belongs to the WD repeat DDB2/WDR76 family.</text>
</comment>